<evidence type="ECO:0000255" key="1">
    <source>
        <dbReference type="HAMAP-Rule" id="MF_01017"/>
    </source>
</evidence>
<name>NQOR_SHIF8</name>
<sequence length="198" mass="20846">MAKVLVLYYSMYGHIETMARAVAEGASKVDGAEVVVKRVPETMPPQLFEKAGGKTQTAPVATPQELADYDAIIFGTPTRFGNMSGQMRTFLDQTGGLWASGALYGKLASVFSSTGTGGGQEQTITSTWTTLAHHGMVIVPIGYAAQELFDVSQVRGGTPYGATTIAGGDGSRQPSQEELSIARYQGEYVAGLAVKLNG</sequence>
<feature type="chain" id="PRO_0000291031" description="NAD(P)H dehydrogenase (quinone)">
    <location>
        <begin position="1"/>
        <end position="198"/>
    </location>
</feature>
<feature type="domain" description="Flavodoxin-like" evidence="1">
    <location>
        <begin position="4"/>
        <end position="189"/>
    </location>
</feature>
<feature type="binding site" evidence="1">
    <location>
        <begin position="10"/>
        <end position="15"/>
    </location>
    <ligand>
        <name>FMN</name>
        <dbReference type="ChEBI" id="CHEBI:58210"/>
    </ligand>
</feature>
<feature type="binding site" evidence="1">
    <location>
        <position position="12"/>
    </location>
    <ligand>
        <name>NAD(+)</name>
        <dbReference type="ChEBI" id="CHEBI:57540"/>
    </ligand>
</feature>
<feature type="binding site" evidence="1">
    <location>
        <begin position="78"/>
        <end position="80"/>
    </location>
    <ligand>
        <name>FMN</name>
        <dbReference type="ChEBI" id="CHEBI:58210"/>
    </ligand>
</feature>
<feature type="binding site" evidence="1">
    <location>
        <position position="98"/>
    </location>
    <ligand>
        <name>substrate</name>
    </ligand>
</feature>
<feature type="binding site" evidence="1">
    <location>
        <begin position="113"/>
        <end position="118"/>
    </location>
    <ligand>
        <name>FMN</name>
        <dbReference type="ChEBI" id="CHEBI:58210"/>
    </ligand>
</feature>
<feature type="binding site" evidence="1">
    <location>
        <position position="133"/>
    </location>
    <ligand>
        <name>FMN</name>
        <dbReference type="ChEBI" id="CHEBI:58210"/>
    </ligand>
</feature>
<organism>
    <name type="scientific">Shigella flexneri serotype 5b (strain 8401)</name>
    <dbReference type="NCBI Taxonomy" id="373384"/>
    <lineage>
        <taxon>Bacteria</taxon>
        <taxon>Pseudomonadati</taxon>
        <taxon>Pseudomonadota</taxon>
        <taxon>Gammaproteobacteria</taxon>
        <taxon>Enterobacterales</taxon>
        <taxon>Enterobacteriaceae</taxon>
        <taxon>Shigella</taxon>
    </lineage>
</organism>
<reference key="1">
    <citation type="journal article" date="2006" name="BMC Genomics">
        <title>Complete genome sequence of Shigella flexneri 5b and comparison with Shigella flexneri 2a.</title>
        <authorList>
            <person name="Nie H."/>
            <person name="Yang F."/>
            <person name="Zhang X."/>
            <person name="Yang J."/>
            <person name="Chen L."/>
            <person name="Wang J."/>
            <person name="Xiong Z."/>
            <person name="Peng J."/>
            <person name="Sun L."/>
            <person name="Dong J."/>
            <person name="Xue Y."/>
            <person name="Xu X."/>
            <person name="Chen S."/>
            <person name="Yao Z."/>
            <person name="Shen Y."/>
            <person name="Jin Q."/>
        </authorList>
    </citation>
    <scope>NUCLEOTIDE SEQUENCE [LARGE SCALE GENOMIC DNA]</scope>
    <source>
        <strain>8401</strain>
    </source>
</reference>
<comment type="catalytic activity">
    <reaction evidence="1">
        <text>a quinone + NADH + H(+) = a quinol + NAD(+)</text>
        <dbReference type="Rhea" id="RHEA:46160"/>
        <dbReference type="ChEBI" id="CHEBI:15378"/>
        <dbReference type="ChEBI" id="CHEBI:24646"/>
        <dbReference type="ChEBI" id="CHEBI:57540"/>
        <dbReference type="ChEBI" id="CHEBI:57945"/>
        <dbReference type="ChEBI" id="CHEBI:132124"/>
        <dbReference type="EC" id="1.6.5.2"/>
    </reaction>
</comment>
<comment type="catalytic activity">
    <reaction evidence="1">
        <text>a quinone + NADPH + H(+) = a quinol + NADP(+)</text>
        <dbReference type="Rhea" id="RHEA:46164"/>
        <dbReference type="ChEBI" id="CHEBI:15378"/>
        <dbReference type="ChEBI" id="CHEBI:24646"/>
        <dbReference type="ChEBI" id="CHEBI:57783"/>
        <dbReference type="ChEBI" id="CHEBI:58349"/>
        <dbReference type="ChEBI" id="CHEBI:132124"/>
        <dbReference type="EC" id="1.6.5.2"/>
    </reaction>
</comment>
<comment type="cofactor">
    <cofactor evidence="1">
        <name>FMN</name>
        <dbReference type="ChEBI" id="CHEBI:58210"/>
    </cofactor>
    <text evidence="1">Binds 1 FMN per monomer.</text>
</comment>
<comment type="similarity">
    <text evidence="1">Belongs to the WrbA family.</text>
</comment>
<proteinExistence type="inferred from homology"/>
<dbReference type="EC" id="1.6.5.2" evidence="1"/>
<dbReference type="EMBL" id="CP000266">
    <property type="protein sequence ID" value="ABF03235.1"/>
    <property type="molecule type" value="Genomic_DNA"/>
</dbReference>
<dbReference type="SMR" id="Q0T630"/>
<dbReference type="CAZy" id="AA6">
    <property type="family name" value="Auxiliary Activities 6"/>
</dbReference>
<dbReference type="KEGG" id="sfv:SFV_1016"/>
<dbReference type="HOGENOM" id="CLU_051402_0_2_6"/>
<dbReference type="Proteomes" id="UP000000659">
    <property type="component" value="Chromosome"/>
</dbReference>
<dbReference type="GO" id="GO:0016020">
    <property type="term" value="C:membrane"/>
    <property type="evidence" value="ECO:0007669"/>
    <property type="project" value="TreeGrafter"/>
</dbReference>
<dbReference type="GO" id="GO:0050660">
    <property type="term" value="F:flavin adenine dinucleotide binding"/>
    <property type="evidence" value="ECO:0007669"/>
    <property type="project" value="UniProtKB-UniRule"/>
</dbReference>
<dbReference type="GO" id="GO:0010181">
    <property type="term" value="F:FMN binding"/>
    <property type="evidence" value="ECO:0007669"/>
    <property type="project" value="InterPro"/>
</dbReference>
<dbReference type="GO" id="GO:0051287">
    <property type="term" value="F:NAD binding"/>
    <property type="evidence" value="ECO:0007669"/>
    <property type="project" value="UniProtKB-UniRule"/>
</dbReference>
<dbReference type="GO" id="GO:0050136">
    <property type="term" value="F:NADH:ubiquinone reductase (non-electrogenic) activity"/>
    <property type="evidence" value="ECO:0007669"/>
    <property type="project" value="RHEA"/>
</dbReference>
<dbReference type="GO" id="GO:0050661">
    <property type="term" value="F:NADP binding"/>
    <property type="evidence" value="ECO:0007669"/>
    <property type="project" value="UniProtKB-UniRule"/>
</dbReference>
<dbReference type="GO" id="GO:0008753">
    <property type="term" value="F:NADPH dehydrogenase (quinone) activity"/>
    <property type="evidence" value="ECO:0007669"/>
    <property type="project" value="RHEA"/>
</dbReference>
<dbReference type="FunFam" id="3.40.50.360:FF:000004">
    <property type="entry name" value="NAD(P)H dehydrogenase (quinone)"/>
    <property type="match status" value="1"/>
</dbReference>
<dbReference type="Gene3D" id="3.40.50.360">
    <property type="match status" value="1"/>
</dbReference>
<dbReference type="HAMAP" id="MF_01017">
    <property type="entry name" value="NQOR"/>
    <property type="match status" value="1"/>
</dbReference>
<dbReference type="InterPro" id="IPR008254">
    <property type="entry name" value="Flavodoxin/NO_synth"/>
</dbReference>
<dbReference type="InterPro" id="IPR029039">
    <property type="entry name" value="Flavoprotein-like_sf"/>
</dbReference>
<dbReference type="InterPro" id="IPR010089">
    <property type="entry name" value="Flavoprotein_WrbA-like"/>
</dbReference>
<dbReference type="InterPro" id="IPR005025">
    <property type="entry name" value="FMN_Rdtase-like_dom"/>
</dbReference>
<dbReference type="InterPro" id="IPR037513">
    <property type="entry name" value="NQO"/>
</dbReference>
<dbReference type="NCBIfam" id="TIGR01755">
    <property type="entry name" value="flav_wrbA"/>
    <property type="match status" value="1"/>
</dbReference>
<dbReference type="NCBIfam" id="NF002999">
    <property type="entry name" value="PRK03767.1"/>
    <property type="match status" value="1"/>
</dbReference>
<dbReference type="PANTHER" id="PTHR30546">
    <property type="entry name" value="FLAVODOXIN-RELATED PROTEIN WRBA-RELATED"/>
    <property type="match status" value="1"/>
</dbReference>
<dbReference type="PANTHER" id="PTHR30546:SF23">
    <property type="entry name" value="FLAVOPROTEIN-LIKE PROTEIN YCP4-RELATED"/>
    <property type="match status" value="1"/>
</dbReference>
<dbReference type="Pfam" id="PF03358">
    <property type="entry name" value="FMN_red"/>
    <property type="match status" value="1"/>
</dbReference>
<dbReference type="SUPFAM" id="SSF52218">
    <property type="entry name" value="Flavoproteins"/>
    <property type="match status" value="1"/>
</dbReference>
<dbReference type="PROSITE" id="PS50902">
    <property type="entry name" value="FLAVODOXIN_LIKE"/>
    <property type="match status" value="1"/>
</dbReference>
<gene>
    <name type="ordered locus">SFV_1016</name>
</gene>
<accession>Q0T630</accession>
<keyword id="KW-0285">Flavoprotein</keyword>
<keyword id="KW-0288">FMN</keyword>
<keyword id="KW-0520">NAD</keyword>
<keyword id="KW-0521">NADP</keyword>
<keyword id="KW-0547">Nucleotide-binding</keyword>
<keyword id="KW-0560">Oxidoreductase</keyword>
<protein>
    <recommendedName>
        <fullName evidence="1">NAD(P)H dehydrogenase (quinone)</fullName>
        <ecNumber evidence="1">1.6.5.2</ecNumber>
    </recommendedName>
    <alternativeName>
        <fullName>Flavoprotein WrbA</fullName>
    </alternativeName>
    <alternativeName>
        <fullName evidence="1">NAD(P)H:quinone oxidoreductase</fullName>
        <shortName evidence="1">NQO</shortName>
    </alternativeName>
</protein>